<evidence type="ECO:0000255" key="1">
    <source>
        <dbReference type="HAMAP-Rule" id="MF_00023"/>
    </source>
</evidence>
<evidence type="ECO:0000256" key="2">
    <source>
        <dbReference type="SAM" id="MobiDB-lite"/>
    </source>
</evidence>
<comment type="function">
    <text evidence="1">Required for rescue of stalled ribosomes mediated by trans-translation. Binds to transfer-messenger RNA (tmRNA), required for stable association of tmRNA with ribosomes. tmRNA and SmpB together mimic tRNA shape, replacing the anticodon stem-loop with SmpB. tmRNA is encoded by the ssrA gene; the 2 termini fold to resemble tRNA(Ala) and it encodes a 'tag peptide', a short internal open reading frame. During trans-translation Ala-aminoacylated tmRNA acts like a tRNA, entering the A-site of stalled ribosomes, displacing the stalled mRNA. The ribosome then switches to translate the ORF on the tmRNA; the nascent peptide is terminated with the 'tag peptide' encoded by the tmRNA and targeted for degradation. The ribosome is freed to recommence translation, which seems to be the essential function of trans-translation.</text>
</comment>
<comment type="subcellular location">
    <subcellularLocation>
        <location evidence="1">Cytoplasm</location>
    </subcellularLocation>
    <text evidence="1">The tmRNA-SmpB complex associates with stalled 70S ribosomes.</text>
</comment>
<comment type="similarity">
    <text evidence="1">Belongs to the SmpB family.</text>
</comment>
<organism>
    <name type="scientific">Burkholderia mallei (strain SAVP1)</name>
    <dbReference type="NCBI Taxonomy" id="320388"/>
    <lineage>
        <taxon>Bacteria</taxon>
        <taxon>Pseudomonadati</taxon>
        <taxon>Pseudomonadota</taxon>
        <taxon>Betaproteobacteria</taxon>
        <taxon>Burkholderiales</taxon>
        <taxon>Burkholderiaceae</taxon>
        <taxon>Burkholderia</taxon>
        <taxon>pseudomallei group</taxon>
    </lineage>
</organism>
<reference key="1">
    <citation type="journal article" date="2010" name="Genome Biol. Evol.">
        <title>Continuing evolution of Burkholderia mallei through genome reduction and large-scale rearrangements.</title>
        <authorList>
            <person name="Losada L."/>
            <person name="Ronning C.M."/>
            <person name="DeShazer D."/>
            <person name="Woods D."/>
            <person name="Fedorova N."/>
            <person name="Kim H.S."/>
            <person name="Shabalina S.A."/>
            <person name="Pearson T.R."/>
            <person name="Brinkac L."/>
            <person name="Tan P."/>
            <person name="Nandi T."/>
            <person name="Crabtree J."/>
            <person name="Badger J."/>
            <person name="Beckstrom-Sternberg S."/>
            <person name="Saqib M."/>
            <person name="Schutzer S.E."/>
            <person name="Keim P."/>
            <person name="Nierman W.C."/>
        </authorList>
    </citation>
    <scope>NUCLEOTIDE SEQUENCE [LARGE SCALE GENOMIC DNA]</scope>
    <source>
        <strain>SAVP1</strain>
    </source>
</reference>
<gene>
    <name evidence="1" type="primary">smpB</name>
    <name type="ordered locus">BMASAVP1_A2032</name>
</gene>
<name>SSRP_BURMS</name>
<accession>A1V545</accession>
<protein>
    <recommendedName>
        <fullName evidence="1">SsrA-binding protein</fullName>
    </recommendedName>
    <alternativeName>
        <fullName evidence="1">Small protein B</fullName>
    </alternativeName>
</protein>
<sequence length="148" mass="17212">MSIIDNRKAFFDYHIEERYEAGLVLEGWEVKALRAGRGQIKEGYVVVKHAEIFLIGTHISPLPEASTHIKPDPVRTRKLLLHRDEIKKLIGKVEQRGYTLVPLNFHYKGGRVKCEIGLAKGKKLHDKRETEKKRDWEREKARIMRSAT</sequence>
<proteinExistence type="inferred from homology"/>
<feature type="chain" id="PRO_1000002015" description="SsrA-binding protein">
    <location>
        <begin position="1"/>
        <end position="148"/>
    </location>
</feature>
<feature type="region of interest" description="Disordered" evidence="2">
    <location>
        <begin position="123"/>
        <end position="148"/>
    </location>
</feature>
<feature type="compositionally biased region" description="Basic and acidic residues" evidence="2">
    <location>
        <begin position="126"/>
        <end position="142"/>
    </location>
</feature>
<dbReference type="EMBL" id="CP000526">
    <property type="protein sequence ID" value="ABM52754.1"/>
    <property type="molecule type" value="Genomic_DNA"/>
</dbReference>
<dbReference type="RefSeq" id="WP_004197080.1">
    <property type="nucleotide sequence ID" value="NC_008785.1"/>
</dbReference>
<dbReference type="SMR" id="A1V545"/>
<dbReference type="GeneID" id="93060677"/>
<dbReference type="KEGG" id="bmv:BMASAVP1_A2032"/>
<dbReference type="HOGENOM" id="CLU_108953_3_0_4"/>
<dbReference type="GO" id="GO:0005829">
    <property type="term" value="C:cytosol"/>
    <property type="evidence" value="ECO:0007669"/>
    <property type="project" value="TreeGrafter"/>
</dbReference>
<dbReference type="GO" id="GO:0003723">
    <property type="term" value="F:RNA binding"/>
    <property type="evidence" value="ECO:0007669"/>
    <property type="project" value="UniProtKB-UniRule"/>
</dbReference>
<dbReference type="GO" id="GO:0070929">
    <property type="term" value="P:trans-translation"/>
    <property type="evidence" value="ECO:0007669"/>
    <property type="project" value="UniProtKB-UniRule"/>
</dbReference>
<dbReference type="CDD" id="cd09294">
    <property type="entry name" value="SmpB"/>
    <property type="match status" value="1"/>
</dbReference>
<dbReference type="Gene3D" id="2.40.280.10">
    <property type="match status" value="1"/>
</dbReference>
<dbReference type="HAMAP" id="MF_00023">
    <property type="entry name" value="SmpB"/>
    <property type="match status" value="1"/>
</dbReference>
<dbReference type="InterPro" id="IPR023620">
    <property type="entry name" value="SmpB"/>
</dbReference>
<dbReference type="InterPro" id="IPR000037">
    <property type="entry name" value="SsrA-bd_prot"/>
</dbReference>
<dbReference type="InterPro" id="IPR020081">
    <property type="entry name" value="SsrA-bd_prot_CS"/>
</dbReference>
<dbReference type="NCBIfam" id="NF003843">
    <property type="entry name" value="PRK05422.1"/>
    <property type="match status" value="1"/>
</dbReference>
<dbReference type="NCBIfam" id="TIGR00086">
    <property type="entry name" value="smpB"/>
    <property type="match status" value="1"/>
</dbReference>
<dbReference type="PANTHER" id="PTHR30308:SF2">
    <property type="entry name" value="SSRA-BINDING PROTEIN"/>
    <property type="match status" value="1"/>
</dbReference>
<dbReference type="PANTHER" id="PTHR30308">
    <property type="entry name" value="TMRNA-BINDING COMPONENT OF TRANS-TRANSLATION TAGGING COMPLEX"/>
    <property type="match status" value="1"/>
</dbReference>
<dbReference type="Pfam" id="PF01668">
    <property type="entry name" value="SmpB"/>
    <property type="match status" value="1"/>
</dbReference>
<dbReference type="SUPFAM" id="SSF74982">
    <property type="entry name" value="Small protein B (SmpB)"/>
    <property type="match status" value="1"/>
</dbReference>
<dbReference type="PROSITE" id="PS01317">
    <property type="entry name" value="SSRP"/>
    <property type="match status" value="1"/>
</dbReference>
<keyword id="KW-0963">Cytoplasm</keyword>
<keyword id="KW-0694">RNA-binding</keyword>